<name>CHM1A_HUMAN</name>
<reference evidence="19" key="1">
    <citation type="journal article" date="1996" name="Gene">
        <title>Molecular cloning, expression and chromosomal localization of a human gene encoding a 33 kDa putative metallopeptidase (PRSM1).</title>
        <authorList>
            <person name="Scott I.C."/>
            <person name="Halila R."/>
            <person name="Jenkins J.M."/>
            <person name="Mehan S."/>
            <person name="Apostolou S."/>
            <person name="Winqvist R."/>
            <person name="Callen D.F."/>
            <person name="Prockop D.J."/>
            <person name="Peltonen L."/>
            <person name="Kadler K.E."/>
        </authorList>
    </citation>
    <scope>NUCLEOTIDE SEQUENCE [MRNA]</scope>
    <scope>PRELIMINARY FUNCTION</scope>
    <scope>TISSUE SPECIFICITY</scope>
    <source>
        <tissue>Fibroblast</tissue>
        <tissue>Placenta</tissue>
    </source>
</reference>
<reference evidence="17 20" key="2">
    <citation type="journal article" date="2001" name="J. Cell Sci.">
        <title>CHMP1 is a novel nuclear matrix protein affecting chromatin structure and cell-cycle progression.</title>
        <authorList>
            <person name="Stauffer D.R."/>
            <person name="Howard T.L."/>
            <person name="Nyun T."/>
            <person name="Hollenberg S.M."/>
        </authorList>
    </citation>
    <scope>NUCLEOTIDE SEQUENCE [MRNA] (ISOFORM 1)</scope>
    <scope>FUNCTION</scope>
    <scope>SUBCELLULAR LOCATION</scope>
    <scope>INDUCTION</scope>
    <source>
        <tissue evidence="3">Placenta</tissue>
    </source>
</reference>
<reference key="3">
    <citation type="journal article" date="1994" name="DNA Res.">
        <title>Prediction of the coding sequences of unidentified human genes. II. The coding sequences of 40 new genes (KIAA0041-KIAA0080) deduced by analysis of cDNA clones from human cell line KG-1.</title>
        <authorList>
            <person name="Nomura N."/>
            <person name="Nagase T."/>
            <person name="Miyajima N."/>
            <person name="Sazuka T."/>
            <person name="Tanaka A."/>
            <person name="Sato S."/>
            <person name="Seki N."/>
            <person name="Kawarabayasi Y."/>
            <person name="Ishikawa K."/>
            <person name="Tabata S."/>
        </authorList>
    </citation>
    <scope>NUCLEOTIDE SEQUENCE [LARGE SCALE MRNA] (ISOFORM 1)</scope>
    <source>
        <tissue>Bone marrow</tissue>
    </source>
</reference>
<reference evidence="17 22" key="4">
    <citation type="submission" date="2003-05" db="EMBL/GenBank/DDBJ databases">
        <title>Cloning of human full-length CDSs in BD Creator(TM) system donor vector.</title>
        <authorList>
            <person name="Kalnine N."/>
            <person name="Chen X."/>
            <person name="Rolfs A."/>
            <person name="Halleck A."/>
            <person name="Hines L."/>
            <person name="Eisenstein S."/>
            <person name="Koundinya M."/>
            <person name="Raphael J."/>
            <person name="Moreira D."/>
            <person name="Kelley T."/>
            <person name="LaBaer J."/>
            <person name="Lin Y."/>
            <person name="Phelan M."/>
            <person name="Farmer A."/>
        </authorList>
    </citation>
    <scope>NUCLEOTIDE SEQUENCE [LARGE SCALE MRNA] (ISOFORM 1)</scope>
</reference>
<reference key="5">
    <citation type="journal article" date="2004" name="Nature">
        <title>The sequence and analysis of duplication-rich human chromosome 16.</title>
        <authorList>
            <person name="Martin J."/>
            <person name="Han C."/>
            <person name="Gordon L.A."/>
            <person name="Terry A."/>
            <person name="Prabhakar S."/>
            <person name="She X."/>
            <person name="Xie G."/>
            <person name="Hellsten U."/>
            <person name="Chan Y.M."/>
            <person name="Altherr M."/>
            <person name="Couronne O."/>
            <person name="Aerts A."/>
            <person name="Bajorek E."/>
            <person name="Black S."/>
            <person name="Blumer H."/>
            <person name="Branscomb E."/>
            <person name="Brown N.C."/>
            <person name="Bruno W.J."/>
            <person name="Buckingham J.M."/>
            <person name="Callen D.F."/>
            <person name="Campbell C.S."/>
            <person name="Campbell M.L."/>
            <person name="Campbell E.W."/>
            <person name="Caoile C."/>
            <person name="Challacombe J.F."/>
            <person name="Chasteen L.A."/>
            <person name="Chertkov O."/>
            <person name="Chi H.C."/>
            <person name="Christensen M."/>
            <person name="Clark L.M."/>
            <person name="Cohn J.D."/>
            <person name="Denys M."/>
            <person name="Detter J.C."/>
            <person name="Dickson M."/>
            <person name="Dimitrijevic-Bussod M."/>
            <person name="Escobar J."/>
            <person name="Fawcett J.J."/>
            <person name="Flowers D."/>
            <person name="Fotopulos D."/>
            <person name="Glavina T."/>
            <person name="Gomez M."/>
            <person name="Gonzales E."/>
            <person name="Goodstein D."/>
            <person name="Goodwin L.A."/>
            <person name="Grady D.L."/>
            <person name="Grigoriev I."/>
            <person name="Groza M."/>
            <person name="Hammon N."/>
            <person name="Hawkins T."/>
            <person name="Haydu L."/>
            <person name="Hildebrand C.E."/>
            <person name="Huang W."/>
            <person name="Israni S."/>
            <person name="Jett J."/>
            <person name="Jewett P.B."/>
            <person name="Kadner K."/>
            <person name="Kimball H."/>
            <person name="Kobayashi A."/>
            <person name="Krawczyk M.-C."/>
            <person name="Leyba T."/>
            <person name="Longmire J.L."/>
            <person name="Lopez F."/>
            <person name="Lou Y."/>
            <person name="Lowry S."/>
            <person name="Ludeman T."/>
            <person name="Manohar C.F."/>
            <person name="Mark G.A."/>
            <person name="McMurray K.L."/>
            <person name="Meincke L.J."/>
            <person name="Morgan J."/>
            <person name="Moyzis R.K."/>
            <person name="Mundt M.O."/>
            <person name="Munk A.C."/>
            <person name="Nandkeshwar R.D."/>
            <person name="Pitluck S."/>
            <person name="Pollard M."/>
            <person name="Predki P."/>
            <person name="Parson-Quintana B."/>
            <person name="Ramirez L."/>
            <person name="Rash S."/>
            <person name="Retterer J."/>
            <person name="Ricke D.O."/>
            <person name="Robinson D.L."/>
            <person name="Rodriguez A."/>
            <person name="Salamov A."/>
            <person name="Saunders E.H."/>
            <person name="Scott D."/>
            <person name="Shough T."/>
            <person name="Stallings R.L."/>
            <person name="Stalvey M."/>
            <person name="Sutherland R.D."/>
            <person name="Tapia R."/>
            <person name="Tesmer J.G."/>
            <person name="Thayer N."/>
            <person name="Thompson L.S."/>
            <person name="Tice H."/>
            <person name="Torney D.C."/>
            <person name="Tran-Gyamfi M."/>
            <person name="Tsai M."/>
            <person name="Ulanovsky L.E."/>
            <person name="Ustaszewska A."/>
            <person name="Vo N."/>
            <person name="White P.S."/>
            <person name="Williams A.L."/>
            <person name="Wills P.L."/>
            <person name="Wu J.-R."/>
            <person name="Wu K."/>
            <person name="Yang J."/>
            <person name="DeJong P."/>
            <person name="Bruce D."/>
            <person name="Doggett N.A."/>
            <person name="Deaven L."/>
            <person name="Schmutz J."/>
            <person name="Grimwood J."/>
            <person name="Richardson P."/>
            <person name="Rokhsar D.S."/>
            <person name="Eichler E.E."/>
            <person name="Gilna P."/>
            <person name="Lucas S.M."/>
            <person name="Myers R.M."/>
            <person name="Rubin E.M."/>
            <person name="Pennacchio L.A."/>
        </authorList>
    </citation>
    <scope>NUCLEOTIDE SEQUENCE [LARGE SCALE GENOMIC DNA]</scope>
</reference>
<reference key="6">
    <citation type="journal article" date="2004" name="Genome Res.">
        <title>The status, quality, and expansion of the NIH full-length cDNA project: the Mammalian Gene Collection (MGC).</title>
        <authorList>
            <consortium name="The MGC Project Team"/>
        </authorList>
    </citation>
    <scope>NUCLEOTIDE SEQUENCE [LARGE SCALE MRNA] (ISOFORMS 1 AND 2)</scope>
    <source>
        <tissue evidence="21">Brain</tissue>
        <tissue evidence="7">Kidney</tissue>
    </source>
</reference>
<reference evidence="17" key="7">
    <citation type="journal article" date="2001" name="J. Cell Sci.">
        <title>CHMP1 functions as a member of a newly defined family of vesicle trafficking proteins.</title>
        <authorList>
            <person name="Howard T.L."/>
            <person name="Stauffer D.R."/>
            <person name="Degnin C.R."/>
            <person name="Hollenberg S.M."/>
        </authorList>
    </citation>
    <scope>FUNCTION</scope>
    <scope>SUBCELLULAR LOCATION</scope>
    <scope>INTERACTION WITH VPS4A</scope>
</reference>
<reference evidence="17" key="8">
    <citation type="journal article" date="2003" name="Cell">
        <title>The protein network of HIV budding.</title>
        <authorList>
            <person name="von Schwedler U.K."/>
            <person name="Stuchell M."/>
            <person name="Mueller B."/>
            <person name="Ward D.M."/>
            <person name="Chung H.-Y."/>
            <person name="Morita E."/>
            <person name="Wang H.E."/>
            <person name="Davis T."/>
            <person name="He G.P."/>
            <person name="Cimbora D.M."/>
            <person name="Scott A."/>
            <person name="Kraeusslich H.-G."/>
            <person name="Kaplan J."/>
            <person name="Morham S.G."/>
            <person name="Sundquist W.I."/>
        </authorList>
    </citation>
    <scope>INTERACTION WITH CHMP1B; VPS4A AND VPS4B</scope>
</reference>
<reference evidence="17" key="9">
    <citation type="journal article" date="2003" name="Proc. Natl. Acad. Sci. U.S.A.">
        <title>Divergent retroviral late-budding domains recruit vacuolar protein sorting factors by using alternative adaptor proteins.</title>
        <authorList>
            <person name="Martin-Serrano J."/>
            <person name="Yarovoy A."/>
            <person name="Perez-Caballero D."/>
            <person name="Bieniasz P.D."/>
        </authorList>
    </citation>
    <scope>SELF-ASSOCIATION</scope>
    <scope>INTERACTION WITH CHMP1B AND VPS4A</scope>
</reference>
<reference key="10">
    <citation type="journal article" date="2003" name="Proc. Natl. Acad. Sci. U.S.A.">
        <authorList>
            <person name="Martin-Serrano J."/>
            <person name="Yarovoy A."/>
            <person name="Perez-Caballero D."/>
            <person name="Bieniasz P.D."/>
        </authorList>
    </citation>
    <scope>ERRATUM OF PUBMED:14519844</scope>
</reference>
<reference key="11">
    <citation type="journal article" date="2009" name="Anal. Chem.">
        <title>Lys-N and trypsin cover complementary parts of the phosphoproteome in a refined SCX-based approach.</title>
        <authorList>
            <person name="Gauci S."/>
            <person name="Helbig A.O."/>
            <person name="Slijper M."/>
            <person name="Krijgsveld J."/>
            <person name="Heck A.J."/>
            <person name="Mohammed S."/>
        </authorList>
    </citation>
    <scope>ACETYLATION [LARGE SCALE ANALYSIS] AT MET-1</scope>
    <scope>IDENTIFICATION BY MASS SPECTROMETRY [LARGE SCALE ANALYSIS]</scope>
</reference>
<reference key="12">
    <citation type="journal article" date="2009" name="Mol. Biol. Cell">
        <title>Essential role of hIST1 in cytokinesis.</title>
        <authorList>
            <person name="Agromayor M."/>
            <person name="Carlton J.G."/>
            <person name="Phelan J.P."/>
            <person name="Matthews D.R."/>
            <person name="Carlin L.M."/>
            <person name="Ameer-Beg S."/>
            <person name="Bowers K."/>
            <person name="Martin-Serrano J."/>
        </authorList>
    </citation>
    <scope>INTERACTION WITH IST1</scope>
</reference>
<reference key="13">
    <citation type="journal article" date="2009" name="Mol. Biol. Cell">
        <title>Biochemical analyses of human IST1 and its function in cytokinesis.</title>
        <authorList>
            <person name="Bajorek M."/>
            <person name="Morita E."/>
            <person name="Skalicky J.J."/>
            <person name="Morham S.G."/>
            <person name="Babst M."/>
            <person name="Sundquist W.I."/>
        </authorList>
    </citation>
    <scope>FUNCTION</scope>
    <scope>INTERACTION WITH IST1</scope>
    <scope>MUTAGENESIS OF LEU-191 AND LEU-194</scope>
</reference>
<reference key="14">
    <citation type="journal article" date="2011" name="BMC Syst. Biol.">
        <title>Initial characterization of the human central proteome.</title>
        <authorList>
            <person name="Burkard T.R."/>
            <person name="Planyavsky M."/>
            <person name="Kaupe I."/>
            <person name="Breitwieser F.P."/>
            <person name="Buerckstuemmer T."/>
            <person name="Bennett K.L."/>
            <person name="Superti-Furga G."/>
            <person name="Colinge J."/>
        </authorList>
    </citation>
    <scope>IDENTIFICATION BY MASS SPECTROMETRY [LARGE SCALE ANALYSIS]</scope>
</reference>
<reference key="15">
    <citation type="journal article" date="2012" name="Nat. Genet.">
        <title>CHMP1A encodes an essential regulator of BMI1-INK4A in cerebellar development.</title>
        <authorList>
            <person name="Mochida G.H."/>
            <person name="Ganesh V.S."/>
            <person name="de Michelena M.I."/>
            <person name="Dias H."/>
            <person name="Atabay K.D."/>
            <person name="Kathrein K.L."/>
            <person name="Huang H.T."/>
            <person name="Hill R.S."/>
            <person name="Felie J.M."/>
            <person name="Rakiec D."/>
            <person name="Gleason D."/>
            <person name="Hill A.D."/>
            <person name="Malik A.N."/>
            <person name="Barry B.J."/>
            <person name="Partlow J.N."/>
            <person name="Tan W.H."/>
            <person name="Glader L.J."/>
            <person name="Barkovich A.J."/>
            <person name="Dobyns W.B."/>
            <person name="Zon L.I."/>
            <person name="Walsh C.A."/>
        </authorList>
    </citation>
    <scope>INVOLVEMENT IN PCH8</scope>
</reference>
<reference key="16">
    <citation type="journal article" date="2013" name="J. Proteome Res.">
        <title>Toward a comprehensive characterization of a human cancer cell phosphoproteome.</title>
        <authorList>
            <person name="Zhou H."/>
            <person name="Di Palma S."/>
            <person name="Preisinger C."/>
            <person name="Peng M."/>
            <person name="Polat A.N."/>
            <person name="Heck A.J."/>
            <person name="Mohammed S."/>
        </authorList>
    </citation>
    <scope>PHOSPHORYLATION [LARGE SCALE ANALYSIS] AT SER-101</scope>
    <scope>IDENTIFICATION BY MASS SPECTROMETRY [LARGE SCALE ANALYSIS]</scope>
    <source>
        <tissue>Erythroleukemia</tissue>
    </source>
</reference>
<reference key="17">
    <citation type="journal article" date="2014" name="J. Proteomics">
        <title>An enzyme assisted RP-RPLC approach for in-depth analysis of human liver phosphoproteome.</title>
        <authorList>
            <person name="Bian Y."/>
            <person name="Song C."/>
            <person name="Cheng K."/>
            <person name="Dong M."/>
            <person name="Wang F."/>
            <person name="Huang J."/>
            <person name="Sun D."/>
            <person name="Wang L."/>
            <person name="Ye M."/>
            <person name="Zou H."/>
        </authorList>
    </citation>
    <scope>PHOSPHORYLATION [LARGE SCALE ANALYSIS] AT SER-173</scope>
    <scope>IDENTIFICATION BY MASS SPECTROMETRY [LARGE SCALE ANALYSIS]</scope>
    <source>
        <tissue>Liver</tissue>
    </source>
</reference>
<reference key="18">
    <citation type="journal article" date="2007" name="Nature">
        <title>ESCRT-III recognition by VPS4 ATPases.</title>
        <authorList>
            <person name="Stuchell-Brereton M.D."/>
            <person name="Skalicky J.J."/>
            <person name="Kieffer C."/>
            <person name="Karren M.A."/>
            <person name="Ghaffarian S."/>
            <person name="Sundquist W.I."/>
        </authorList>
    </citation>
    <scope>STRUCTURE BY NMR OF 180-196 IN COMPLEX WITH VPS4A</scope>
</reference>
<reference key="19">
    <citation type="journal article" date="2012" name="Proc. Natl. Acad. Sci. U.S.A.">
        <title>ESCRT-III binding protein MITD1 is involved in cytokinesis and has an unanticipated PLD fold that binds membranes.</title>
        <authorList>
            <person name="Hadders M.A."/>
            <person name="Agromayor M."/>
            <person name="Obita T."/>
            <person name="Perisic O."/>
            <person name="Caballe A."/>
            <person name="Kloc M."/>
            <person name="Lamers M.H."/>
            <person name="Williams R.L."/>
            <person name="Martin-Serrano J."/>
        </authorList>
    </citation>
    <scope>X-RAY CRYSTALLOGRAPHY (1.91 ANGSTROMS) OF 184-196 IN COMPLEX WITH MITD1</scope>
    <scope>FUNCTION</scope>
    <scope>INTERACTION WITH MITD1</scope>
</reference>
<accession>Q9HD42</accession>
<accession>A2RU09</accession>
<accession>Q14468</accession>
<accession>Q15779</accession>
<accession>Q96G31</accession>
<sequence>MDDTLFQLKFTAKQLEKLAKKAEKDSKAEQAKVKKALLQKNVECARVYAENAIRKKNEGVNWLRMASRVDAVASKVQTAVTMKGVTKNMAQVTKALDKALSTMDLQKVSSVMDRFEQQVQNLDVHTSVMEDSMSSATTLTTPQEQVDSLIMQIAEENGLEVLDQLSQLPEGASAVGESSVRSQEDQLSRRLAALRN</sequence>
<proteinExistence type="evidence at protein level"/>
<evidence type="ECO:0000255" key="1"/>
<evidence type="ECO:0000256" key="2">
    <source>
        <dbReference type="SAM" id="MobiDB-lite"/>
    </source>
</evidence>
<evidence type="ECO:0000269" key="3">
    <source>
    </source>
</evidence>
<evidence type="ECO:0000269" key="4">
    <source>
    </source>
</evidence>
<evidence type="ECO:0000269" key="5">
    <source>
    </source>
</evidence>
<evidence type="ECO:0000269" key="6">
    <source>
    </source>
</evidence>
<evidence type="ECO:0000269" key="7">
    <source>
    </source>
</evidence>
<evidence type="ECO:0000269" key="8">
    <source>
    </source>
</evidence>
<evidence type="ECO:0000269" key="9">
    <source>
    </source>
</evidence>
<evidence type="ECO:0000269" key="10">
    <source>
    </source>
</evidence>
<evidence type="ECO:0000269" key="11">
    <source>
    </source>
</evidence>
<evidence type="ECO:0000269" key="12">
    <source>
    </source>
</evidence>
<evidence type="ECO:0000269" key="13">
    <source>
    </source>
</evidence>
<evidence type="ECO:0000303" key="14">
    <source>
    </source>
</evidence>
<evidence type="ECO:0000303" key="15">
    <source>
    </source>
</evidence>
<evidence type="ECO:0000303" key="16">
    <source>
    </source>
</evidence>
<evidence type="ECO:0000305" key="17"/>
<evidence type="ECO:0000305" key="18">
    <source>
    </source>
</evidence>
<evidence type="ECO:0000312" key="19">
    <source>
        <dbReference type="EMBL" id="AAC50775.1"/>
    </source>
</evidence>
<evidence type="ECO:0000312" key="20">
    <source>
        <dbReference type="EMBL" id="AAG01448.1"/>
    </source>
</evidence>
<evidence type="ECO:0000312" key="21">
    <source>
        <dbReference type="EMBL" id="AAH10000.2"/>
    </source>
</evidence>
<evidence type="ECO:0000312" key="22">
    <source>
        <dbReference type="EMBL" id="AAP35487.1"/>
    </source>
</evidence>
<evidence type="ECO:0007744" key="23">
    <source>
    </source>
</evidence>
<evidence type="ECO:0007744" key="24">
    <source>
    </source>
</evidence>
<evidence type="ECO:0007744" key="25">
    <source>
    </source>
</evidence>
<evidence type="ECO:0007829" key="26">
    <source>
        <dbReference type="PDB" id="4A5X"/>
    </source>
</evidence>
<organism>
    <name type="scientific">Homo sapiens</name>
    <name type="common">Human</name>
    <dbReference type="NCBI Taxonomy" id="9606"/>
    <lineage>
        <taxon>Eukaryota</taxon>
        <taxon>Metazoa</taxon>
        <taxon>Chordata</taxon>
        <taxon>Craniata</taxon>
        <taxon>Vertebrata</taxon>
        <taxon>Euteleostomi</taxon>
        <taxon>Mammalia</taxon>
        <taxon>Eutheria</taxon>
        <taxon>Euarchontoglires</taxon>
        <taxon>Primates</taxon>
        <taxon>Haplorrhini</taxon>
        <taxon>Catarrhini</taxon>
        <taxon>Hominidae</taxon>
        <taxon>Homo</taxon>
    </lineage>
</organism>
<protein>
    <recommendedName>
        <fullName>Charged multivesicular body protein 1a</fullName>
    </recommendedName>
    <alternativeName>
        <fullName>Chromatin-modifying protein 1a</fullName>
        <shortName>CHMP1a</shortName>
    </alternativeName>
    <alternativeName>
        <fullName>Vacuolar protein sorting-associated protein 46-1</fullName>
        <shortName>Vps46-1</shortName>
        <shortName>hVps46-1</shortName>
    </alternativeName>
</protein>
<dbReference type="EMBL" id="U58048">
    <property type="protein sequence ID" value="AAC50775.1"/>
    <property type="status" value="ALT_SEQ"/>
    <property type="molecule type" value="mRNA"/>
</dbReference>
<dbReference type="EMBL" id="AF281063">
    <property type="protein sequence ID" value="AAG01448.1"/>
    <property type="molecule type" value="mRNA"/>
</dbReference>
<dbReference type="EMBL" id="D38554">
    <property type="protein sequence ID" value="BAA07557.1"/>
    <property type="status" value="ALT_SEQ"/>
    <property type="molecule type" value="mRNA"/>
</dbReference>
<dbReference type="EMBL" id="BT006841">
    <property type="protein sequence ID" value="AAP35487.1"/>
    <property type="molecule type" value="mRNA"/>
</dbReference>
<dbReference type="EMBL" id="AC010538">
    <property type="status" value="NOT_ANNOTATED_CDS"/>
    <property type="molecule type" value="Genomic_DNA"/>
</dbReference>
<dbReference type="EMBL" id="BC007527">
    <property type="status" value="NOT_ANNOTATED_CDS"/>
    <property type="molecule type" value="mRNA"/>
</dbReference>
<dbReference type="EMBL" id="BC010000">
    <property type="protein sequence ID" value="AAH10000.2"/>
    <property type="molecule type" value="mRNA"/>
</dbReference>
<dbReference type="EMBL" id="BC132711">
    <property type="protein sequence ID" value="AAI32712.1"/>
    <property type="molecule type" value="mRNA"/>
</dbReference>
<dbReference type="EMBL" id="BC132713">
    <property type="protein sequence ID" value="AAI32714.1"/>
    <property type="molecule type" value="mRNA"/>
</dbReference>
<dbReference type="CCDS" id="CCDS45552.1">
    <molecule id="Q9HD42-1"/>
</dbReference>
<dbReference type="PIR" id="JC4963">
    <property type="entry name" value="JC4963"/>
</dbReference>
<dbReference type="RefSeq" id="NP_002759.2">
    <molecule id="Q9HD42-1"/>
    <property type="nucleotide sequence ID" value="NM_002768.5"/>
</dbReference>
<dbReference type="PDB" id="2JQ9">
    <property type="method" value="NMR"/>
    <property type="chains" value="B=180-196"/>
</dbReference>
<dbReference type="PDB" id="2YMB">
    <property type="method" value="X-ray"/>
    <property type="resolution" value="3.40 A"/>
    <property type="chains" value="F/H=184-196"/>
</dbReference>
<dbReference type="PDB" id="4A5X">
    <property type="method" value="X-ray"/>
    <property type="resolution" value="1.91 A"/>
    <property type="chains" value="C/D=184-196"/>
</dbReference>
<dbReference type="PDBsum" id="2JQ9"/>
<dbReference type="PDBsum" id="2YMB"/>
<dbReference type="PDBsum" id="4A5X"/>
<dbReference type="SMR" id="Q9HD42"/>
<dbReference type="BioGRID" id="111148">
    <property type="interactions" value="150"/>
</dbReference>
<dbReference type="ComplexPortal" id="CPX-329">
    <property type="entry name" value="ESCRT-III complex"/>
</dbReference>
<dbReference type="CORUM" id="Q9HD42"/>
<dbReference type="DIP" id="DIP-50647N"/>
<dbReference type="FunCoup" id="Q9HD42">
    <property type="interactions" value="2168"/>
</dbReference>
<dbReference type="IntAct" id="Q9HD42">
    <property type="interactions" value="90"/>
</dbReference>
<dbReference type="MINT" id="Q9HD42"/>
<dbReference type="STRING" id="9606.ENSP00000380998"/>
<dbReference type="MoonDB" id="Q9HD42">
    <property type="type" value="Curated"/>
</dbReference>
<dbReference type="GlyGen" id="Q9HD42">
    <property type="glycosylation" value="1 site, 1 O-linked glycan (1 site)"/>
</dbReference>
<dbReference type="iPTMnet" id="Q9HD42"/>
<dbReference type="MetOSite" id="Q9HD42"/>
<dbReference type="PhosphoSitePlus" id="Q9HD42"/>
<dbReference type="BioMuta" id="CHMP1A"/>
<dbReference type="DMDM" id="62510514"/>
<dbReference type="jPOST" id="Q9HD42"/>
<dbReference type="MassIVE" id="Q9HD42"/>
<dbReference type="PaxDb" id="9606-ENSP00000380998"/>
<dbReference type="PeptideAtlas" id="Q9HD42"/>
<dbReference type="ProteomicsDB" id="81828">
    <molecule id="Q9HD42-1"/>
</dbReference>
<dbReference type="ProteomicsDB" id="81829">
    <molecule id="Q9HD42-2"/>
</dbReference>
<dbReference type="Pumba" id="Q9HD42"/>
<dbReference type="Antibodypedia" id="1706">
    <property type="antibodies" value="227 antibodies from 28 providers"/>
</dbReference>
<dbReference type="DNASU" id="5119"/>
<dbReference type="Ensembl" id="ENST00000397901.8">
    <molecule id="Q9HD42-1"/>
    <property type="protein sequence ID" value="ENSP00000380998.3"/>
    <property type="gene ID" value="ENSG00000131165.16"/>
</dbReference>
<dbReference type="GeneID" id="5119"/>
<dbReference type="KEGG" id="hsa:5119"/>
<dbReference type="MANE-Select" id="ENST00000397901.8">
    <property type="protein sequence ID" value="ENSP00000380998.3"/>
    <property type="RefSeq nucleotide sequence ID" value="NM_002768.5"/>
    <property type="RefSeq protein sequence ID" value="NP_002759.2"/>
</dbReference>
<dbReference type="UCSC" id="uc002fnu.5">
    <molecule id="Q9HD42-1"/>
    <property type="organism name" value="human"/>
</dbReference>
<dbReference type="AGR" id="HGNC:8740"/>
<dbReference type="CTD" id="5119"/>
<dbReference type="DisGeNET" id="5119"/>
<dbReference type="GeneCards" id="CHMP1A"/>
<dbReference type="HGNC" id="HGNC:8740">
    <property type="gene designation" value="CHMP1A"/>
</dbReference>
<dbReference type="HPA" id="ENSG00000131165">
    <property type="expression patterns" value="Low tissue specificity"/>
</dbReference>
<dbReference type="MalaCards" id="CHMP1A"/>
<dbReference type="MIM" id="164010">
    <property type="type" value="gene"/>
</dbReference>
<dbReference type="MIM" id="614961">
    <property type="type" value="phenotype"/>
</dbReference>
<dbReference type="neXtProt" id="NX_Q9HD42"/>
<dbReference type="OpenTargets" id="ENSG00000131165"/>
<dbReference type="Orphanet" id="324569">
    <property type="disease" value="Pontocerebellar hypoplasia type 8"/>
</dbReference>
<dbReference type="PharmGKB" id="PA33085"/>
<dbReference type="VEuPathDB" id="HostDB:ENSG00000131165"/>
<dbReference type="eggNOG" id="KOG3232">
    <property type="taxonomic scope" value="Eukaryota"/>
</dbReference>
<dbReference type="GeneTree" id="ENSGT00950000182832"/>
<dbReference type="HOGENOM" id="CLU_080826_1_0_1"/>
<dbReference type="InParanoid" id="Q9HD42"/>
<dbReference type="OMA" id="DMIFQLR"/>
<dbReference type="OrthoDB" id="10266568at2759"/>
<dbReference type="PAN-GO" id="Q9HD42">
    <property type="GO annotations" value="5 GO annotations based on evolutionary models"/>
</dbReference>
<dbReference type="PhylomeDB" id="Q9HD42"/>
<dbReference type="TreeFam" id="TF300076"/>
<dbReference type="PathwayCommons" id="Q9HD42"/>
<dbReference type="Reactome" id="R-HSA-9610379">
    <property type="pathway name" value="HCMV Late Events"/>
</dbReference>
<dbReference type="SignaLink" id="Q9HD42"/>
<dbReference type="SIGNOR" id="Q9HD42"/>
<dbReference type="BioGRID-ORCS" id="5119">
    <property type="hits" value="354 hits in 1170 CRISPR screens"/>
</dbReference>
<dbReference type="CD-CODE" id="FB4E32DD">
    <property type="entry name" value="Presynaptic clusters and postsynaptic densities"/>
</dbReference>
<dbReference type="ChiTaRS" id="CHMP1A">
    <property type="organism name" value="human"/>
</dbReference>
<dbReference type="EvolutionaryTrace" id="Q9HD42"/>
<dbReference type="GeneWiki" id="CHMP1A"/>
<dbReference type="GenomeRNAi" id="5119"/>
<dbReference type="Pharos" id="Q9HD42">
    <property type="development level" value="Tbio"/>
</dbReference>
<dbReference type="PRO" id="PR:Q9HD42"/>
<dbReference type="Proteomes" id="UP000005640">
    <property type="component" value="Chromosome 16"/>
</dbReference>
<dbReference type="RNAct" id="Q9HD42">
    <property type="molecule type" value="protein"/>
</dbReference>
<dbReference type="Bgee" id="ENSG00000131165">
    <property type="expression patterns" value="Expressed in endometrium epithelium and 213 other cell types or tissues"/>
</dbReference>
<dbReference type="ExpressionAtlas" id="Q9HD42">
    <property type="expression patterns" value="baseline and differential"/>
</dbReference>
<dbReference type="GO" id="GO:1904930">
    <property type="term" value="C:amphisome membrane"/>
    <property type="evidence" value="ECO:0000314"/>
    <property type="project" value="ComplexPortal"/>
</dbReference>
<dbReference type="GO" id="GO:0000421">
    <property type="term" value="C:autophagosome membrane"/>
    <property type="evidence" value="ECO:0000314"/>
    <property type="project" value="ComplexPortal"/>
</dbReference>
<dbReference type="GO" id="GO:0000794">
    <property type="term" value="C:condensed nuclear chromosome"/>
    <property type="evidence" value="ECO:0000314"/>
    <property type="project" value="UniProtKB"/>
</dbReference>
<dbReference type="GO" id="GO:0005829">
    <property type="term" value="C:cytosol"/>
    <property type="evidence" value="ECO:0000304"/>
    <property type="project" value="Reactome"/>
</dbReference>
<dbReference type="GO" id="GO:0005769">
    <property type="term" value="C:early endosome"/>
    <property type="evidence" value="ECO:0000314"/>
    <property type="project" value="UniProtKB"/>
</dbReference>
<dbReference type="GO" id="GO:0012505">
    <property type="term" value="C:endomembrane system"/>
    <property type="evidence" value="ECO:0000314"/>
    <property type="project" value="UniProtKB"/>
</dbReference>
<dbReference type="GO" id="GO:0000815">
    <property type="term" value="C:ESCRT III complex"/>
    <property type="evidence" value="ECO:0000318"/>
    <property type="project" value="GO_Central"/>
</dbReference>
<dbReference type="GO" id="GO:0070062">
    <property type="term" value="C:extracellular exosome"/>
    <property type="evidence" value="ECO:0007005"/>
    <property type="project" value="UniProtKB"/>
</dbReference>
<dbReference type="GO" id="GO:0000776">
    <property type="term" value="C:kinetochore"/>
    <property type="evidence" value="ECO:0000314"/>
    <property type="project" value="ComplexPortal"/>
</dbReference>
<dbReference type="GO" id="GO:0005828">
    <property type="term" value="C:kinetochore microtubule"/>
    <property type="evidence" value="ECO:0000314"/>
    <property type="project" value="ComplexPortal"/>
</dbReference>
<dbReference type="GO" id="GO:0005765">
    <property type="term" value="C:lysosomal membrane"/>
    <property type="evidence" value="ECO:0000314"/>
    <property type="project" value="ComplexPortal"/>
</dbReference>
<dbReference type="GO" id="GO:0005815">
    <property type="term" value="C:microtubule organizing center"/>
    <property type="evidence" value="ECO:0000314"/>
    <property type="project" value="UniProtKB"/>
</dbReference>
<dbReference type="GO" id="GO:0030496">
    <property type="term" value="C:midbody"/>
    <property type="evidence" value="ECO:0000314"/>
    <property type="project" value="ComplexPortal"/>
</dbReference>
<dbReference type="GO" id="GO:0005771">
    <property type="term" value="C:multivesicular body"/>
    <property type="evidence" value="ECO:0000318"/>
    <property type="project" value="GO_Central"/>
</dbReference>
<dbReference type="GO" id="GO:0032585">
    <property type="term" value="C:multivesicular body membrane"/>
    <property type="evidence" value="ECO:0000314"/>
    <property type="project" value="ComplexPortal"/>
</dbReference>
<dbReference type="GO" id="GO:0016363">
    <property type="term" value="C:nuclear matrix"/>
    <property type="evidence" value="ECO:0000314"/>
    <property type="project" value="UniProtKB"/>
</dbReference>
<dbReference type="GO" id="GO:0005643">
    <property type="term" value="C:nuclear pore"/>
    <property type="evidence" value="ECO:0000314"/>
    <property type="project" value="ComplexPortal"/>
</dbReference>
<dbReference type="GO" id="GO:0005886">
    <property type="term" value="C:plasma membrane"/>
    <property type="evidence" value="ECO:0000314"/>
    <property type="project" value="ComplexPortal"/>
</dbReference>
<dbReference type="GO" id="GO:0042802">
    <property type="term" value="F:identical protein binding"/>
    <property type="evidence" value="ECO:0000353"/>
    <property type="project" value="IntAct"/>
</dbReference>
<dbReference type="GO" id="GO:0008237">
    <property type="term" value="F:metallopeptidase activity"/>
    <property type="evidence" value="ECO:0000304"/>
    <property type="project" value="ProtInc"/>
</dbReference>
<dbReference type="GO" id="GO:0019904">
    <property type="term" value="F:protein domain specific binding"/>
    <property type="evidence" value="ECO:0000353"/>
    <property type="project" value="UniProtKB"/>
</dbReference>
<dbReference type="GO" id="GO:0042803">
    <property type="term" value="F:protein homodimerization activity"/>
    <property type="evidence" value="ECO:0000353"/>
    <property type="project" value="UniProtKB"/>
</dbReference>
<dbReference type="GO" id="GO:0008270">
    <property type="term" value="F:zinc ion binding"/>
    <property type="evidence" value="ECO:0000304"/>
    <property type="project" value="ProtInc"/>
</dbReference>
<dbReference type="GO" id="GO:0097352">
    <property type="term" value="P:autophagosome maturation"/>
    <property type="evidence" value="ECO:0000315"/>
    <property type="project" value="ComplexPortal"/>
</dbReference>
<dbReference type="GO" id="GO:0006914">
    <property type="term" value="P:autophagy"/>
    <property type="evidence" value="ECO:0000315"/>
    <property type="project" value="ComplexPortal"/>
</dbReference>
<dbReference type="GO" id="GO:0051301">
    <property type="term" value="P:cell division"/>
    <property type="evidence" value="ECO:0000315"/>
    <property type="project" value="UniProtKB"/>
</dbReference>
<dbReference type="GO" id="GO:0032509">
    <property type="term" value="P:endosome transport via multivesicular body sorting pathway"/>
    <property type="evidence" value="ECO:0000318"/>
    <property type="project" value="GO_Central"/>
</dbReference>
<dbReference type="GO" id="GO:1904903">
    <property type="term" value="P:ESCRT III complex disassembly"/>
    <property type="evidence" value="ECO:0000303"/>
    <property type="project" value="ParkinsonsUK-UCL"/>
</dbReference>
<dbReference type="GO" id="GO:1902774">
    <property type="term" value="P:late endosome to lysosome transport"/>
    <property type="evidence" value="ECO:0000315"/>
    <property type="project" value="ComplexPortal"/>
</dbReference>
<dbReference type="GO" id="GO:0045324">
    <property type="term" value="P:late endosome to vacuole transport"/>
    <property type="evidence" value="ECO:0000318"/>
    <property type="project" value="GO_Central"/>
</dbReference>
<dbReference type="GO" id="GO:0090148">
    <property type="term" value="P:membrane fission"/>
    <property type="evidence" value="ECO:0000303"/>
    <property type="project" value="ComplexPortal"/>
</dbReference>
<dbReference type="GO" id="GO:0061952">
    <property type="term" value="P:midbody abscission"/>
    <property type="evidence" value="ECO:0000315"/>
    <property type="project" value="UniProtKB"/>
</dbReference>
<dbReference type="GO" id="GO:0007076">
    <property type="term" value="P:mitotic chromosome condensation"/>
    <property type="evidence" value="ECO:0000314"/>
    <property type="project" value="UniProtKB"/>
</dbReference>
<dbReference type="GO" id="GO:0007080">
    <property type="term" value="P:mitotic metaphase chromosome alignment"/>
    <property type="evidence" value="ECO:0000315"/>
    <property type="project" value="UniProtKB"/>
</dbReference>
<dbReference type="GO" id="GO:0036258">
    <property type="term" value="P:multivesicular body assembly"/>
    <property type="evidence" value="ECO:0000303"/>
    <property type="project" value="ParkinsonsUK-UCL"/>
</dbReference>
<dbReference type="GO" id="GO:0071985">
    <property type="term" value="P:multivesicular body sorting pathway"/>
    <property type="evidence" value="ECO:0000314"/>
    <property type="project" value="ComplexPortal"/>
</dbReference>
<dbReference type="GO" id="GO:0061763">
    <property type="term" value="P:multivesicular body-lysosome fusion"/>
    <property type="evidence" value="ECO:0000303"/>
    <property type="project" value="ComplexPortal"/>
</dbReference>
<dbReference type="GO" id="GO:0010629">
    <property type="term" value="P:negative regulation of gene expression"/>
    <property type="evidence" value="ECO:0000314"/>
    <property type="project" value="UniProtKB"/>
</dbReference>
<dbReference type="GO" id="GO:0031468">
    <property type="term" value="P:nuclear membrane reassembly"/>
    <property type="evidence" value="ECO:0000315"/>
    <property type="project" value="ComplexPortal"/>
</dbReference>
<dbReference type="GO" id="GO:0006997">
    <property type="term" value="P:nucleus organization"/>
    <property type="evidence" value="ECO:0000315"/>
    <property type="project" value="UniProtKB"/>
</dbReference>
<dbReference type="GO" id="GO:0001778">
    <property type="term" value="P:plasma membrane repair"/>
    <property type="evidence" value="ECO:0000314"/>
    <property type="project" value="ComplexPortal"/>
</dbReference>
<dbReference type="GO" id="GO:0015031">
    <property type="term" value="P:protein transport"/>
    <property type="evidence" value="ECO:0000318"/>
    <property type="project" value="GO_Central"/>
</dbReference>
<dbReference type="GO" id="GO:0010824">
    <property type="term" value="P:regulation of centrosome duplication"/>
    <property type="evidence" value="ECO:0000315"/>
    <property type="project" value="UniProtKB"/>
</dbReference>
<dbReference type="GO" id="GO:1901673">
    <property type="term" value="P:regulation of mitotic spindle assembly"/>
    <property type="evidence" value="ECO:0000315"/>
    <property type="project" value="UniProtKB"/>
</dbReference>
<dbReference type="GO" id="GO:0043162">
    <property type="term" value="P:ubiquitin-dependent protein catabolic process via the multivesicular body sorting pathway"/>
    <property type="evidence" value="ECO:0000314"/>
    <property type="project" value="ComplexPortal"/>
</dbReference>
<dbReference type="GO" id="GO:0051469">
    <property type="term" value="P:vesicle fusion with vacuole"/>
    <property type="evidence" value="ECO:0000303"/>
    <property type="project" value="ComplexPortal"/>
</dbReference>
<dbReference type="GO" id="GO:0016192">
    <property type="term" value="P:vesicle-mediated transport"/>
    <property type="evidence" value="ECO:0000314"/>
    <property type="project" value="UniProtKB"/>
</dbReference>
<dbReference type="GO" id="GO:0046761">
    <property type="term" value="P:viral budding from plasma membrane"/>
    <property type="evidence" value="ECO:0000314"/>
    <property type="project" value="ComplexPortal"/>
</dbReference>
<dbReference type="GO" id="GO:0039702">
    <property type="term" value="P:viral budding via host ESCRT complex"/>
    <property type="evidence" value="ECO:0000314"/>
    <property type="project" value="ComplexPortal"/>
</dbReference>
<dbReference type="Gene3D" id="6.10.140.1230">
    <property type="match status" value="1"/>
</dbReference>
<dbReference type="IDEAL" id="IID00253"/>
<dbReference type="InterPro" id="IPR005024">
    <property type="entry name" value="Snf7_fam"/>
</dbReference>
<dbReference type="PANTHER" id="PTHR10476">
    <property type="entry name" value="CHARGED MULTIVESICULAR BODY PROTEIN"/>
    <property type="match status" value="1"/>
</dbReference>
<dbReference type="Pfam" id="PF03357">
    <property type="entry name" value="Snf7"/>
    <property type="match status" value="1"/>
</dbReference>
<feature type="chain" id="PRO_0000211448" description="Charged multivesicular body protein 1a">
    <location>
        <begin position="1"/>
        <end position="196"/>
    </location>
</feature>
<feature type="region of interest" description="Disordered" evidence="2">
    <location>
        <begin position="173"/>
        <end position="196"/>
    </location>
</feature>
<feature type="coiled-coil region" evidence="1">
    <location>
        <begin position="5"/>
        <end position="47"/>
    </location>
</feature>
<feature type="coiled-coil region" evidence="1">
    <location>
        <begin position="102"/>
        <end position="124"/>
    </location>
</feature>
<feature type="short sequence motif" description="MIT-interacting motif">
    <location>
        <begin position="185"/>
        <end position="195"/>
    </location>
</feature>
<feature type="modified residue" description="N-acetylmethionine" evidence="23">
    <location>
        <position position="1"/>
    </location>
</feature>
<feature type="modified residue" description="Phosphoserine" evidence="24">
    <location>
        <position position="101"/>
    </location>
</feature>
<feature type="modified residue" description="Phosphoserine" evidence="25">
    <location>
        <position position="173"/>
    </location>
</feature>
<feature type="splice variant" id="VSP_051716" description="In isoform 2." evidence="16">
    <location>
        <begin position="1"/>
        <end position="128"/>
    </location>
</feature>
<feature type="mutagenesis site" description="No effect on interaction with IST1; when associated with L-194." evidence="9">
    <original>L</original>
    <variation>A</variation>
    <location>
        <position position="191"/>
    </location>
</feature>
<feature type="mutagenesis site" description="No effect on interaction with IST1; when associated with L-194." evidence="9">
    <original>L</original>
    <variation>A</variation>
    <location>
        <position position="194"/>
    </location>
</feature>
<feature type="sequence conflict" description="In Ref. 1; AAC50775." evidence="17" ref="1">
    <original>Q</original>
    <variation>D</variation>
    <location>
        <position position="77"/>
    </location>
</feature>
<feature type="helix" evidence="26">
    <location>
        <begin position="184"/>
        <end position="195"/>
    </location>
</feature>
<gene>
    <name type="primary">CHMP1A</name>
    <name evidence="15" type="synonym">CHMP1</name>
    <name evidence="16" type="synonym">KIAA0047</name>
    <name type="synonym">PCOLN3</name>
    <name evidence="14" type="synonym">PRSM1</name>
</gene>
<comment type="function">
    <text evidence="3 4 9 12">Probable peripherally associated component of the endosomal sorting required for transport complex III (ESCRT-III) which is involved in multivesicular bodies (MVBs) formation and sorting of endosomal cargo proteins into MVBs. MVBs contain intraluminal vesicles (ILVs) that are generated by invagination and scission from the limiting membrane of the endosome and mostly are delivered to lysosomes enabling degradation of membrane proteins, such as stimulated growth factor receptors, lysosomal enzymes and lipids. The MVB pathway appears to require the sequential function of ESCRT-O, -I,-II and -III complexes. ESCRT-III proteins mostly dissociate from the invaginating membrane before the ILV is released. The ESCRT machinery also functions in topologically equivalent membrane fission events, such as the terminal stages of cytokinesis and the budding of enveloped viruses (HIV-1 and other lentiviruses). ESCRT-III proteins are believed to mediate the necessary vesicle extrusion and/or membrane fission activities, possibly in conjunction with the AAA ATPase VPS4. Involved in cytokinesis. Involved in recruiting VPS4A and/or VPS4B to the midbody of dividing cells. May also be involved in chromosome condensation. Targets the Polycomb group (PcG) protein BMI1/PCGF4 to regions of condensed chromatin. May play a role in stable cell cycle progression and in PcG gene silencing.</text>
</comment>
<comment type="subunit">
    <text evidence="4 5 6 8 9 10 12">Probable peripherally associated component of the endosomal sorting required for transport complex III (ESCRT-III). ESCRT-III components are thought to multimerize to form a flat lattice on the perimeter membrane of the endosome. Several assembly forms of ESCRT-III may exist that interact and act sequentially. Self-associates. Interacts with CHMP1B. Interacts with VPS4A. Interacts with VPS4B. Interacts with PHF1. Interacts with IST1. Interacts with MITD1.</text>
</comment>
<comment type="interaction">
    <interactant intactId="EBI-1057156">
        <id>Q9HD42</id>
    </interactant>
    <interactant intactId="EBI-725606">
        <id>Q9NWQ9</id>
        <label>C14orf119</label>
    </interactant>
    <organismsDiffer>false</organismsDiffer>
    <experiments>3</experiments>
</comment>
<comment type="interaction">
    <interactant intactId="EBI-1057156">
        <id>Q9HD42</id>
    </interactant>
    <interactant intactId="EBI-1057156">
        <id>Q9HD42</id>
        <label>CHMP1A</label>
    </interactant>
    <organismsDiffer>false</organismsDiffer>
    <experiments>6</experiments>
</comment>
<comment type="interaction">
    <interactant intactId="EBI-1057156">
        <id>Q9HD42</id>
    </interactant>
    <interactant intactId="EBI-2118090">
        <id>Q7LBR1</id>
        <label>CHMP1B</label>
    </interactant>
    <organismsDiffer>false</organismsDiffer>
    <experiments>3</experiments>
</comment>
<comment type="interaction">
    <interactant intactId="EBI-1057156">
        <id>Q9HD42</id>
    </interactant>
    <interactant intactId="EBI-742054">
        <id>Q96D03</id>
        <label>DDIT4L</label>
    </interactant>
    <organismsDiffer>false</organismsDiffer>
    <experiments>3</experiments>
</comment>
<comment type="interaction">
    <interactant intactId="EBI-1057156">
        <id>Q9HD42</id>
    </interactant>
    <interactant intactId="EBI-739467">
        <id>Q9H8Y8</id>
        <label>GORASP2</label>
    </interactant>
    <organismsDiffer>false</organismsDiffer>
    <experiments>3</experiments>
</comment>
<comment type="interaction">
    <interactant intactId="EBI-1057156">
        <id>Q9HD42</id>
    </interactant>
    <interactant intactId="EBI-466029">
        <id>P42858</id>
        <label>HTT</label>
    </interactant>
    <organismsDiffer>false</organismsDiffer>
    <experiments>12</experiments>
</comment>
<comment type="interaction">
    <interactant intactId="EBI-1057156">
        <id>Q9HD42</id>
    </interactant>
    <interactant intactId="EBI-12188567">
        <id>P53990-3</id>
        <label>IST1</label>
    </interactant>
    <organismsDiffer>false</organismsDiffer>
    <experiments>3</experiments>
</comment>
<comment type="interaction">
    <interactant intactId="EBI-1057156">
        <id>Q9HD42</id>
    </interactant>
    <interactant intactId="EBI-2691489">
        <id>Q8WV92</id>
        <label>MITD1</label>
    </interactant>
    <organismsDiffer>false</organismsDiffer>
    <experiments>3</experiments>
</comment>
<comment type="interaction">
    <interactant intactId="EBI-1057156">
        <id>Q9HD42</id>
    </interactant>
    <interactant intactId="EBI-50433196">
        <id>A0A6Q8PF08</id>
        <label>PMP22</label>
    </interactant>
    <organismsDiffer>false</organismsDiffer>
    <experiments>3</experiments>
</comment>
<comment type="interaction">
    <interactant intactId="EBI-1057156">
        <id>Q9HD42</id>
    </interactant>
    <interactant intactId="EBI-359352">
        <id>P25786</id>
        <label>PSMA1</label>
    </interactant>
    <organismsDiffer>false</organismsDiffer>
    <experiments>3</experiments>
</comment>
<comment type="interaction">
    <interactant intactId="EBI-1057156">
        <id>Q9HD42</id>
    </interactant>
    <interactant intactId="EBI-727004">
        <id>O00560</id>
        <label>SDCBP</label>
    </interactant>
    <organismsDiffer>false</organismsDiffer>
    <experiments>3</experiments>
</comment>
<comment type="interaction">
    <interactant intactId="EBI-1057156">
        <id>Q9HD42</id>
    </interactant>
    <interactant intactId="EBI-985879">
        <id>P37840</id>
        <label>SNCA</label>
    </interactant>
    <organismsDiffer>false</organismsDiffer>
    <experiments>3</experiments>
</comment>
<comment type="interaction">
    <interactant intactId="EBI-1057156">
        <id>Q9HD42</id>
    </interactant>
    <interactant intactId="EBI-396676">
        <id>O95630</id>
        <label>STAMBP</label>
    </interactant>
    <organismsDiffer>false</organismsDiffer>
    <experiments>8</experiments>
</comment>
<comment type="interaction">
    <interactant intactId="EBI-1057156">
        <id>Q9HD42</id>
    </interactant>
    <interactant intactId="EBI-2932492">
        <id>Q99757</id>
        <label>TXN2</label>
    </interactant>
    <organismsDiffer>false</organismsDiffer>
    <experiments>3</experiments>
</comment>
<comment type="interaction">
    <interactant intactId="EBI-1057156">
        <id>Q9HD42</id>
    </interactant>
    <interactant intactId="EBI-1050865">
        <id>P40818</id>
        <label>USP8</label>
    </interactant>
    <organismsDiffer>false</organismsDiffer>
    <experiments>3</experiments>
</comment>
<comment type="interaction">
    <interactant intactId="EBI-1057156">
        <id>Q9HD42</id>
    </interactant>
    <interactant intactId="EBI-1171942">
        <id>Q9UN37</id>
        <label>VPS4A</label>
    </interactant>
    <organismsDiffer>false</organismsDiffer>
    <experiments>8</experiments>
</comment>
<comment type="interaction">
    <interactant intactId="EBI-1057156">
        <id>Q9HD42</id>
    </interactant>
    <interactant intactId="EBI-2514459">
        <id>O75351</id>
        <label>VPS4B</label>
    </interactant>
    <organismsDiffer>false</organismsDiffer>
    <experiments>3</experiments>
</comment>
<comment type="interaction">
    <interactant intactId="EBI-1057156">
        <id>Q9HD42</id>
    </interactant>
    <interactant intactId="EBI-740160">
        <id>Q9NP79</id>
        <label>VTA1</label>
    </interactant>
    <organismsDiffer>false</organismsDiffer>
    <experiments>4</experiments>
</comment>
<comment type="interaction">
    <interactant intactId="EBI-1057156">
        <id>Q9HD42</id>
    </interactant>
    <interactant intactId="EBI-515331">
        <id>P07947</id>
        <label>YES1</label>
    </interactant>
    <organismsDiffer>false</organismsDiffer>
    <experiments>3</experiments>
</comment>
<comment type="interaction">
    <interactant intactId="EBI-15663713">
        <id>Q9HD42-1</id>
    </interactant>
    <interactant intactId="EBI-1171942">
        <id>Q9UN37</id>
        <label>VPS4A</label>
    </interactant>
    <organismsDiffer>false</organismsDiffer>
    <experiments>2</experiments>
</comment>
<comment type="subcellular location">
    <subcellularLocation>
        <location>Cytoplasm</location>
    </subcellularLocation>
    <subcellularLocation>
        <location>Endosome membrane</location>
        <topology>Peripheral membrane protein</topology>
    </subcellularLocation>
    <subcellularLocation>
        <location>Nucleus matrix</location>
    </subcellularLocation>
    <text>The cytoplasmic form is partially membrane-associated and localizes to early endosomes. The nuclear form remains associated with the chromosome scaffold during mitosis. On overexpression, it localizes to nuclear bodies characterized by nuclease-resistant condensed chromatin.</text>
</comment>
<comment type="alternative products">
    <event type="alternative splicing"/>
    <isoform>
        <id>Q9HD42-1</id>
        <name evidence="3">1</name>
        <sequence type="displayed"/>
    </isoform>
    <isoform>
        <id>Q9HD42-2</id>
        <name evidence="17">2</name>
        <sequence type="described" ref="VSP_051716"/>
    </isoform>
</comment>
<comment type="tissue specificity">
    <text evidence="13">Expressed in placenta, cultured skin fibroblasts and in osteoblast cell line MG-63.</text>
</comment>
<comment type="induction">
    <text evidence="3">By muristerone.</text>
</comment>
<comment type="disease" evidence="11">
    <disease id="DI-03633">
        <name>Pontocerebellar hypoplasia 8</name>
        <acronym>PCH8</acronym>
        <description>An autosomal recessive neurodevelopmental disorder characterized by severe psychomotor retardation, abnormal movements, hypotonia, spasticity, and variable visual defects. Brain MRI shows pontocerebellar hypoplasia, decreased cerebral white matter, and a thin corpus callosum.</description>
        <dbReference type="MIM" id="614961"/>
    </disease>
    <text>The disease is caused by variants affecting the gene represented in this entry.</text>
</comment>
<comment type="similarity">
    <text evidence="1">Belongs to the SNF7 family.</text>
</comment>
<comment type="caution">
    <text evidence="18">Was originally (PubMed:8863740) thought to be a metalloprotease (PRSM1). This was based on a wrong translation of the ORF which gave rise to a putative protein of 318 AA containing a pattern reminiscent of zinc metalloproteases.</text>
</comment>
<comment type="sequence caution" evidence="17">
    <conflict type="erroneous translation">
        <sequence resource="EMBL-CDS" id="AAC50775"/>
    </conflict>
    <text>Wrong choice of frame.</text>
</comment>
<comment type="sequence caution" evidence="17">
    <conflict type="erroneous translation">
        <sequence resource="EMBL-CDS" id="BAA07557"/>
    </conflict>
    <text>Wrong choice of frame.</text>
</comment>
<keyword id="KW-0002">3D-structure</keyword>
<keyword id="KW-0007">Acetylation</keyword>
<keyword id="KW-0025">Alternative splicing</keyword>
<keyword id="KW-0131">Cell cycle</keyword>
<keyword id="KW-0132">Cell division</keyword>
<keyword id="KW-0175">Coiled coil</keyword>
<keyword id="KW-0963">Cytoplasm</keyword>
<keyword id="KW-0967">Endosome</keyword>
<keyword id="KW-0472">Membrane</keyword>
<keyword id="KW-0523">Neurodegeneration</keyword>
<keyword id="KW-0539">Nucleus</keyword>
<keyword id="KW-0597">Phosphoprotein</keyword>
<keyword id="KW-0653">Protein transport</keyword>
<keyword id="KW-1267">Proteomics identification</keyword>
<keyword id="KW-1185">Reference proteome</keyword>
<keyword id="KW-0678">Repressor</keyword>
<keyword id="KW-0804">Transcription</keyword>
<keyword id="KW-0805">Transcription regulation</keyword>
<keyword id="KW-0813">Transport</keyword>